<protein>
    <recommendedName>
        <fullName>Ovomucoid</fullName>
    </recommendedName>
</protein>
<sequence length="56" mass="6049">FAPVNVDCSDHPKPACLQEQKPLCGSDNKTYDNKCSFCNAVVDSNGTLTLSHFGKC</sequence>
<feature type="chain" id="PRO_0000073159" description="Ovomucoid">
    <location>
        <begin position="1" status="less than"/>
        <end position="56" status="greater than"/>
    </location>
</feature>
<feature type="domain" description="Kazal-like" evidence="1">
    <location>
        <begin position="6"/>
        <end position="56"/>
    </location>
</feature>
<feature type="site" description="Reactive bond 3">
    <location>
        <begin position="18"/>
        <end position="19"/>
    </location>
</feature>
<feature type="glycosylation site" description="N-linked (GlcNAc...) asparagine">
    <location>
        <position position="45"/>
    </location>
</feature>
<feature type="disulfide bond">
    <location>
        <begin position="8"/>
        <end position="38"/>
    </location>
</feature>
<feature type="disulfide bond">
    <location>
        <begin position="16"/>
        <end position="35"/>
    </location>
</feature>
<feature type="disulfide bond">
    <location>
        <begin position="24"/>
        <end position="56"/>
    </location>
</feature>
<feature type="non-terminal residue">
    <location>
        <position position="1"/>
    </location>
</feature>
<feature type="non-terminal residue">
    <location>
        <position position="56"/>
    </location>
</feature>
<accession>P67896</accession>
<accession>P05583</accession>
<keyword id="KW-0903">Direct protein sequencing</keyword>
<keyword id="KW-1015">Disulfide bond</keyword>
<keyword id="KW-0325">Glycoprotein</keyword>
<keyword id="KW-0646">Protease inhibitor</keyword>
<keyword id="KW-0677">Repeat</keyword>
<keyword id="KW-0964">Secreted</keyword>
<keyword id="KW-0722">Serine protease inhibitor</keyword>
<name>IOVO_PENSU</name>
<comment type="subcellular location">
    <subcellularLocation>
        <location>Secreted</location>
    </subcellularLocation>
</comment>
<comment type="domain">
    <text>Avian ovomucoid consists of three homologous, tandem Kazal family inhibitory domains.</text>
</comment>
<evidence type="ECO:0000255" key="1">
    <source>
        <dbReference type="PROSITE-ProRule" id="PRU00798"/>
    </source>
</evidence>
<dbReference type="PIR" id="I61492">
    <property type="entry name" value="I61492"/>
</dbReference>
<dbReference type="SMR" id="P67896"/>
<dbReference type="GO" id="GO:0005576">
    <property type="term" value="C:extracellular region"/>
    <property type="evidence" value="ECO:0007669"/>
    <property type="project" value="UniProtKB-SubCell"/>
</dbReference>
<dbReference type="GO" id="GO:0004867">
    <property type="term" value="F:serine-type endopeptidase inhibitor activity"/>
    <property type="evidence" value="ECO:0007669"/>
    <property type="project" value="UniProtKB-KW"/>
</dbReference>
<dbReference type="CDD" id="cd00104">
    <property type="entry name" value="KAZAL_FS"/>
    <property type="match status" value="1"/>
</dbReference>
<dbReference type="FunFam" id="3.30.60.30:FF:000037">
    <property type="entry name" value="Ovomucoid"/>
    <property type="match status" value="1"/>
</dbReference>
<dbReference type="Gene3D" id="3.30.60.30">
    <property type="match status" value="1"/>
</dbReference>
<dbReference type="InterPro" id="IPR051597">
    <property type="entry name" value="Bifunctional_prot_inhibitor"/>
</dbReference>
<dbReference type="InterPro" id="IPR002350">
    <property type="entry name" value="Kazal_dom"/>
</dbReference>
<dbReference type="InterPro" id="IPR036058">
    <property type="entry name" value="Kazal_dom_sf"/>
</dbReference>
<dbReference type="PANTHER" id="PTHR47729:SF1">
    <property type="entry name" value="OVOMUCOID-LIKE-RELATED"/>
    <property type="match status" value="1"/>
</dbReference>
<dbReference type="PANTHER" id="PTHR47729">
    <property type="entry name" value="SERINE PEPTIDASE INHIBITOR, KAZAL TYPE 2, TANDEM DUPLICATE 1-RELATED"/>
    <property type="match status" value="1"/>
</dbReference>
<dbReference type="Pfam" id="PF00050">
    <property type="entry name" value="Kazal_1"/>
    <property type="match status" value="1"/>
</dbReference>
<dbReference type="SMART" id="SM00280">
    <property type="entry name" value="KAZAL"/>
    <property type="match status" value="1"/>
</dbReference>
<dbReference type="SUPFAM" id="SSF100895">
    <property type="entry name" value="Kazal-type serine protease inhibitors"/>
    <property type="match status" value="1"/>
</dbReference>
<dbReference type="PROSITE" id="PS00282">
    <property type="entry name" value="KAZAL_1"/>
    <property type="match status" value="1"/>
</dbReference>
<dbReference type="PROSITE" id="PS51465">
    <property type="entry name" value="KAZAL_2"/>
    <property type="match status" value="1"/>
</dbReference>
<reference key="1">
    <citation type="journal article" date="1990" name="J. Protein Chem.">
        <title>Amino acid sequences of ovomucoid third domain from 25 additional species of birds.</title>
        <authorList>
            <person name="Laskowski M. Jr."/>
            <person name="Apostol I."/>
            <person name="Ardelt W."/>
            <person name="Cook J."/>
            <person name="Giletto A."/>
            <person name="Kelly C.A."/>
            <person name="Lu W."/>
            <person name="Park S.J."/>
            <person name="Qasim M.A."/>
            <person name="Whatley H.E."/>
            <person name="Wieczorek A."/>
            <person name="Wynn R."/>
        </authorList>
    </citation>
    <scope>PROTEIN SEQUENCE</scope>
</reference>
<organism>
    <name type="scientific">Penelope superciliaris</name>
    <name type="common">Rusty-margined guan</name>
    <dbReference type="NCBI Taxonomy" id="8987"/>
    <lineage>
        <taxon>Eukaryota</taxon>
        <taxon>Metazoa</taxon>
        <taxon>Chordata</taxon>
        <taxon>Craniata</taxon>
        <taxon>Vertebrata</taxon>
        <taxon>Euteleostomi</taxon>
        <taxon>Archelosauria</taxon>
        <taxon>Archosauria</taxon>
        <taxon>Dinosauria</taxon>
        <taxon>Saurischia</taxon>
        <taxon>Theropoda</taxon>
        <taxon>Coelurosauria</taxon>
        <taxon>Aves</taxon>
        <taxon>Neognathae</taxon>
        <taxon>Galloanserae</taxon>
        <taxon>Galliformes</taxon>
        <taxon>Cracidae</taxon>
        <taxon>Penelope</taxon>
    </lineage>
</organism>
<proteinExistence type="evidence at protein level"/>